<protein>
    <recommendedName>
        <fullName evidence="1">3-methyl-2-oxobutanoate hydroxymethyltransferase</fullName>
        <ecNumber evidence="1">2.1.2.11</ecNumber>
    </recommendedName>
    <alternativeName>
        <fullName evidence="1">Ketopantoate hydroxymethyltransferase</fullName>
        <shortName evidence="1">KPHMT</shortName>
    </alternativeName>
</protein>
<proteinExistence type="inferred from homology"/>
<accession>Q9ZEP8</accession>
<accession>C3K247</accession>
<evidence type="ECO:0000255" key="1">
    <source>
        <dbReference type="HAMAP-Rule" id="MF_00156"/>
    </source>
</evidence>
<sequence>MPDITLTTLQSLKLKGEKITMLTCYDATFAHASCQAGIEVLLVGDSLGMVLQGNDSTLPVTTDELAYHTASVKRGNDGAFIIADLPFMGYATLEQTFQNAGKLMQAGAHMIKVEGAVWLAESIRLLAERGVPVCAHMGLTPQSVNLLGGYKVQGRNEAQARQMRADAIALEQAGAAMILLECVPSELAAEITQAVKVPVIGIGAGSATDGQVLVLHDMLGLSITGRVPKFVKNFMTGQASIHDALSAYVAEVKGVTFPGAEHGFSA</sequence>
<reference key="1">
    <citation type="journal article" date="1999" name="Environ. Microbiol.">
        <title>Adaptation of Pseudomonas fluorescens to the plant rhizosphere.</title>
        <authorList>
            <person name="Rainey P.B."/>
        </authorList>
    </citation>
    <scope>NUCLEOTIDE SEQUENCE [GENOMIC DNA]</scope>
</reference>
<reference key="2">
    <citation type="journal article" date="2009" name="Genome Biol.">
        <title>Genomic and genetic analyses of diversity and plant interactions of Pseudomonas fluorescens.</title>
        <authorList>
            <person name="Silby M.W."/>
            <person name="Cerdeno-Tarraga A.M."/>
            <person name="Vernikos G.S."/>
            <person name="Giddens S.R."/>
            <person name="Jackson R.W."/>
            <person name="Preston G.M."/>
            <person name="Zhang X.-X."/>
            <person name="Moon C.D."/>
            <person name="Gehrig S.M."/>
            <person name="Godfrey S.A.C."/>
            <person name="Knight C.G."/>
            <person name="Malone J.G."/>
            <person name="Robinson Z."/>
            <person name="Spiers A.J."/>
            <person name="Harris S."/>
            <person name="Challis G.L."/>
            <person name="Yaxley A.M."/>
            <person name="Harris D."/>
            <person name="Seeger K."/>
            <person name="Murphy L."/>
            <person name="Rutter S."/>
            <person name="Squares R."/>
            <person name="Quail M.A."/>
            <person name="Saunders E."/>
            <person name="Mavromatis K."/>
            <person name="Brettin T.S."/>
            <person name="Bentley S.D."/>
            <person name="Hothersall J."/>
            <person name="Stephens E."/>
            <person name="Thomas C.M."/>
            <person name="Parkhill J."/>
            <person name="Levy S.B."/>
            <person name="Rainey P.B."/>
            <person name="Thomson N.R."/>
        </authorList>
    </citation>
    <scope>NUCLEOTIDE SEQUENCE [LARGE SCALE GENOMIC DNA]</scope>
    <source>
        <strain>SBW25</strain>
    </source>
</reference>
<name>PANB_PSEFS</name>
<gene>
    <name evidence="1" type="primary">panB</name>
    <name type="ordered locus">PFLU_5241</name>
</gene>
<dbReference type="EC" id="2.1.2.11" evidence="1"/>
<dbReference type="EMBL" id="AJ130846">
    <property type="protein sequence ID" value="CAA10222.1"/>
    <property type="molecule type" value="Genomic_DNA"/>
</dbReference>
<dbReference type="EMBL" id="AM181176">
    <property type="protein sequence ID" value="CAY52332.1"/>
    <property type="molecule type" value="Genomic_DNA"/>
</dbReference>
<dbReference type="RefSeq" id="WP_015885907.1">
    <property type="nucleotide sequence ID" value="NC_012660.1"/>
</dbReference>
<dbReference type="SMR" id="Q9ZEP8"/>
<dbReference type="STRING" id="294.SRM1_04857"/>
<dbReference type="PATRIC" id="fig|216595.4.peg.5373"/>
<dbReference type="eggNOG" id="COG0413">
    <property type="taxonomic scope" value="Bacteria"/>
</dbReference>
<dbReference type="HOGENOM" id="CLU_036645_1_0_6"/>
<dbReference type="OrthoDB" id="9781789at2"/>
<dbReference type="UniPathway" id="UPA00028">
    <property type="reaction ID" value="UER00003"/>
</dbReference>
<dbReference type="GO" id="GO:0005737">
    <property type="term" value="C:cytoplasm"/>
    <property type="evidence" value="ECO:0007669"/>
    <property type="project" value="UniProtKB-SubCell"/>
</dbReference>
<dbReference type="GO" id="GO:0003864">
    <property type="term" value="F:3-methyl-2-oxobutanoate hydroxymethyltransferase activity"/>
    <property type="evidence" value="ECO:0007669"/>
    <property type="project" value="UniProtKB-UniRule"/>
</dbReference>
<dbReference type="GO" id="GO:0000287">
    <property type="term" value="F:magnesium ion binding"/>
    <property type="evidence" value="ECO:0007669"/>
    <property type="project" value="TreeGrafter"/>
</dbReference>
<dbReference type="GO" id="GO:0015940">
    <property type="term" value="P:pantothenate biosynthetic process"/>
    <property type="evidence" value="ECO:0007669"/>
    <property type="project" value="UniProtKB-UniRule"/>
</dbReference>
<dbReference type="CDD" id="cd06557">
    <property type="entry name" value="KPHMT-like"/>
    <property type="match status" value="1"/>
</dbReference>
<dbReference type="FunFam" id="3.20.20.60:FF:000003">
    <property type="entry name" value="3-methyl-2-oxobutanoate hydroxymethyltransferase"/>
    <property type="match status" value="1"/>
</dbReference>
<dbReference type="Gene3D" id="3.20.20.60">
    <property type="entry name" value="Phosphoenolpyruvate-binding domains"/>
    <property type="match status" value="1"/>
</dbReference>
<dbReference type="HAMAP" id="MF_00156">
    <property type="entry name" value="PanB"/>
    <property type="match status" value="1"/>
</dbReference>
<dbReference type="InterPro" id="IPR003700">
    <property type="entry name" value="Pantoate_hydroxy_MeTrfase"/>
</dbReference>
<dbReference type="InterPro" id="IPR015813">
    <property type="entry name" value="Pyrv/PenolPyrv_kinase-like_dom"/>
</dbReference>
<dbReference type="InterPro" id="IPR040442">
    <property type="entry name" value="Pyrv_kinase-like_dom_sf"/>
</dbReference>
<dbReference type="NCBIfam" id="TIGR00222">
    <property type="entry name" value="panB"/>
    <property type="match status" value="1"/>
</dbReference>
<dbReference type="NCBIfam" id="NF001452">
    <property type="entry name" value="PRK00311.1"/>
    <property type="match status" value="1"/>
</dbReference>
<dbReference type="PANTHER" id="PTHR20881">
    <property type="entry name" value="3-METHYL-2-OXOBUTANOATE HYDROXYMETHYLTRANSFERASE"/>
    <property type="match status" value="1"/>
</dbReference>
<dbReference type="PANTHER" id="PTHR20881:SF0">
    <property type="entry name" value="3-METHYL-2-OXOBUTANOATE HYDROXYMETHYLTRANSFERASE"/>
    <property type="match status" value="1"/>
</dbReference>
<dbReference type="Pfam" id="PF02548">
    <property type="entry name" value="Pantoate_transf"/>
    <property type="match status" value="1"/>
</dbReference>
<dbReference type="PIRSF" id="PIRSF000388">
    <property type="entry name" value="Pantoate_hydroxy_MeTrfase"/>
    <property type="match status" value="1"/>
</dbReference>
<dbReference type="SUPFAM" id="SSF51621">
    <property type="entry name" value="Phosphoenolpyruvate/pyruvate domain"/>
    <property type="match status" value="1"/>
</dbReference>
<feature type="chain" id="PRO_0000184876" description="3-methyl-2-oxobutanoate hydroxymethyltransferase">
    <location>
        <begin position="1"/>
        <end position="266"/>
    </location>
</feature>
<feature type="active site" description="Proton acceptor" evidence="1">
    <location>
        <position position="181"/>
    </location>
</feature>
<feature type="binding site" evidence="1">
    <location>
        <begin position="45"/>
        <end position="46"/>
    </location>
    <ligand>
        <name>3-methyl-2-oxobutanoate</name>
        <dbReference type="ChEBI" id="CHEBI:11851"/>
    </ligand>
</feature>
<feature type="binding site" evidence="1">
    <location>
        <position position="45"/>
    </location>
    <ligand>
        <name>Mg(2+)</name>
        <dbReference type="ChEBI" id="CHEBI:18420"/>
    </ligand>
</feature>
<feature type="binding site" evidence="1">
    <location>
        <position position="84"/>
    </location>
    <ligand>
        <name>3-methyl-2-oxobutanoate</name>
        <dbReference type="ChEBI" id="CHEBI:11851"/>
    </ligand>
</feature>
<feature type="binding site" evidence="1">
    <location>
        <position position="84"/>
    </location>
    <ligand>
        <name>Mg(2+)</name>
        <dbReference type="ChEBI" id="CHEBI:18420"/>
    </ligand>
</feature>
<feature type="binding site" evidence="1">
    <location>
        <position position="112"/>
    </location>
    <ligand>
        <name>3-methyl-2-oxobutanoate</name>
        <dbReference type="ChEBI" id="CHEBI:11851"/>
    </ligand>
</feature>
<feature type="binding site" evidence="1">
    <location>
        <position position="114"/>
    </location>
    <ligand>
        <name>Mg(2+)</name>
        <dbReference type="ChEBI" id="CHEBI:18420"/>
    </ligand>
</feature>
<comment type="function">
    <text evidence="1">Catalyzes the reversible reaction in which hydroxymethyl group from 5,10-methylenetetrahydrofolate is transferred onto alpha-ketoisovalerate to form ketopantoate.</text>
</comment>
<comment type="catalytic activity">
    <reaction evidence="1">
        <text>3-methyl-2-oxobutanoate + (6R)-5,10-methylene-5,6,7,8-tetrahydrofolate + H2O = 2-dehydropantoate + (6S)-5,6,7,8-tetrahydrofolate</text>
        <dbReference type="Rhea" id="RHEA:11824"/>
        <dbReference type="ChEBI" id="CHEBI:11561"/>
        <dbReference type="ChEBI" id="CHEBI:11851"/>
        <dbReference type="ChEBI" id="CHEBI:15377"/>
        <dbReference type="ChEBI" id="CHEBI:15636"/>
        <dbReference type="ChEBI" id="CHEBI:57453"/>
        <dbReference type="EC" id="2.1.2.11"/>
    </reaction>
</comment>
<comment type="cofactor">
    <cofactor evidence="1">
        <name>Mg(2+)</name>
        <dbReference type="ChEBI" id="CHEBI:18420"/>
    </cofactor>
    <text evidence="1">Binds 1 Mg(2+) ion per subunit.</text>
</comment>
<comment type="pathway">
    <text evidence="1">Cofactor biosynthesis; (R)-pantothenate biosynthesis; (R)-pantoate from 3-methyl-2-oxobutanoate: step 1/2.</text>
</comment>
<comment type="subunit">
    <text evidence="1">Homodecamer; pentamer of dimers.</text>
</comment>
<comment type="subcellular location">
    <subcellularLocation>
        <location evidence="1">Cytoplasm</location>
    </subcellularLocation>
</comment>
<comment type="similarity">
    <text evidence="1">Belongs to the PanB family.</text>
</comment>
<organism>
    <name type="scientific">Pseudomonas fluorescens (strain SBW25)</name>
    <dbReference type="NCBI Taxonomy" id="216595"/>
    <lineage>
        <taxon>Bacteria</taxon>
        <taxon>Pseudomonadati</taxon>
        <taxon>Pseudomonadota</taxon>
        <taxon>Gammaproteobacteria</taxon>
        <taxon>Pseudomonadales</taxon>
        <taxon>Pseudomonadaceae</taxon>
        <taxon>Pseudomonas</taxon>
    </lineage>
</organism>
<keyword id="KW-0963">Cytoplasm</keyword>
<keyword id="KW-0460">Magnesium</keyword>
<keyword id="KW-0479">Metal-binding</keyword>
<keyword id="KW-0566">Pantothenate biosynthesis</keyword>
<keyword id="KW-0808">Transferase</keyword>